<feature type="chain" id="PRO_0000177509" description="Translation initiation factor IF-3">
    <location>
        <begin position="1"/>
        <end position="177"/>
    </location>
</feature>
<gene>
    <name evidence="1" type="primary">infC</name>
    <name type="ordered locus">CPE1894</name>
</gene>
<organism>
    <name type="scientific">Clostridium perfringens (strain 13 / Type A)</name>
    <dbReference type="NCBI Taxonomy" id="195102"/>
    <lineage>
        <taxon>Bacteria</taxon>
        <taxon>Bacillati</taxon>
        <taxon>Bacillota</taxon>
        <taxon>Clostridia</taxon>
        <taxon>Eubacteriales</taxon>
        <taxon>Clostridiaceae</taxon>
        <taxon>Clostridium</taxon>
    </lineage>
</organism>
<name>IF3_CLOPE</name>
<reference key="1">
    <citation type="journal article" date="2002" name="Proc. Natl. Acad. Sci. U.S.A.">
        <title>Complete genome sequence of Clostridium perfringens, an anaerobic flesh-eater.</title>
        <authorList>
            <person name="Shimizu T."/>
            <person name="Ohtani K."/>
            <person name="Hirakawa H."/>
            <person name="Ohshima K."/>
            <person name="Yamashita A."/>
            <person name="Shiba T."/>
            <person name="Ogasawara N."/>
            <person name="Hattori M."/>
            <person name="Kuhara S."/>
            <person name="Hayashi H."/>
        </authorList>
    </citation>
    <scope>NUCLEOTIDE SEQUENCE [LARGE SCALE GENOMIC DNA]</scope>
    <source>
        <strain>13 / Type A</strain>
    </source>
</reference>
<sequence>MLSEVNKISKNFAINQEIREKEVRLISSTGEQLGVVSGRDAQRMADEAELDLVMISPNAKPPVCKIMDYGKFIYEQSKKEKEAKKKQKVISVKEIRVSPTIEKHDLEIKAKNAKKFLEAGDKVKITVRFRGREAEHSHVGVKILDSFLAQLEEVCSVEKPAKLEGRNMIMILAPKKA</sequence>
<proteinExistence type="inferred from homology"/>
<dbReference type="EMBL" id="BA000016">
    <property type="protein sequence ID" value="BAB81600.1"/>
    <property type="status" value="ALT_INIT"/>
    <property type="molecule type" value="Genomic_DNA"/>
</dbReference>
<dbReference type="SMR" id="Q8XJ67"/>
<dbReference type="STRING" id="195102.gene:10491159"/>
<dbReference type="KEGG" id="cpe:CPE1894"/>
<dbReference type="HOGENOM" id="CLU_054919_3_3_9"/>
<dbReference type="Proteomes" id="UP000000818">
    <property type="component" value="Chromosome"/>
</dbReference>
<dbReference type="GO" id="GO:0005829">
    <property type="term" value="C:cytosol"/>
    <property type="evidence" value="ECO:0007669"/>
    <property type="project" value="TreeGrafter"/>
</dbReference>
<dbReference type="GO" id="GO:0016020">
    <property type="term" value="C:membrane"/>
    <property type="evidence" value="ECO:0007669"/>
    <property type="project" value="TreeGrafter"/>
</dbReference>
<dbReference type="GO" id="GO:0043022">
    <property type="term" value="F:ribosome binding"/>
    <property type="evidence" value="ECO:0007669"/>
    <property type="project" value="TreeGrafter"/>
</dbReference>
<dbReference type="GO" id="GO:0003743">
    <property type="term" value="F:translation initiation factor activity"/>
    <property type="evidence" value="ECO:0007669"/>
    <property type="project" value="UniProtKB-UniRule"/>
</dbReference>
<dbReference type="GO" id="GO:0032790">
    <property type="term" value="P:ribosome disassembly"/>
    <property type="evidence" value="ECO:0007669"/>
    <property type="project" value="TreeGrafter"/>
</dbReference>
<dbReference type="FunFam" id="3.10.20.80:FF:000001">
    <property type="entry name" value="Translation initiation factor IF-3"/>
    <property type="match status" value="1"/>
</dbReference>
<dbReference type="FunFam" id="3.30.110.10:FF:000001">
    <property type="entry name" value="Translation initiation factor IF-3"/>
    <property type="match status" value="1"/>
</dbReference>
<dbReference type="Gene3D" id="3.30.110.10">
    <property type="entry name" value="Translation initiation factor 3 (IF-3), C-terminal domain"/>
    <property type="match status" value="1"/>
</dbReference>
<dbReference type="Gene3D" id="3.10.20.80">
    <property type="entry name" value="Translation initiation factor 3 (IF-3), N-terminal domain"/>
    <property type="match status" value="1"/>
</dbReference>
<dbReference type="HAMAP" id="MF_00080">
    <property type="entry name" value="IF_3"/>
    <property type="match status" value="1"/>
</dbReference>
<dbReference type="InterPro" id="IPR036788">
    <property type="entry name" value="T_IF-3_C_sf"/>
</dbReference>
<dbReference type="InterPro" id="IPR036787">
    <property type="entry name" value="T_IF-3_N_sf"/>
</dbReference>
<dbReference type="InterPro" id="IPR019813">
    <property type="entry name" value="Translation_initiation_fac3_CS"/>
</dbReference>
<dbReference type="InterPro" id="IPR001288">
    <property type="entry name" value="Translation_initiation_fac_3"/>
</dbReference>
<dbReference type="InterPro" id="IPR019815">
    <property type="entry name" value="Translation_initiation_fac_3_C"/>
</dbReference>
<dbReference type="InterPro" id="IPR019814">
    <property type="entry name" value="Translation_initiation_fac_3_N"/>
</dbReference>
<dbReference type="NCBIfam" id="TIGR00168">
    <property type="entry name" value="infC"/>
    <property type="match status" value="1"/>
</dbReference>
<dbReference type="PANTHER" id="PTHR10938">
    <property type="entry name" value="TRANSLATION INITIATION FACTOR IF-3"/>
    <property type="match status" value="1"/>
</dbReference>
<dbReference type="PANTHER" id="PTHR10938:SF0">
    <property type="entry name" value="TRANSLATION INITIATION FACTOR IF-3, MITOCHONDRIAL"/>
    <property type="match status" value="1"/>
</dbReference>
<dbReference type="Pfam" id="PF00707">
    <property type="entry name" value="IF3_C"/>
    <property type="match status" value="1"/>
</dbReference>
<dbReference type="Pfam" id="PF05198">
    <property type="entry name" value="IF3_N"/>
    <property type="match status" value="1"/>
</dbReference>
<dbReference type="SUPFAM" id="SSF55200">
    <property type="entry name" value="Translation initiation factor IF3, C-terminal domain"/>
    <property type="match status" value="1"/>
</dbReference>
<dbReference type="SUPFAM" id="SSF54364">
    <property type="entry name" value="Translation initiation factor IF3, N-terminal domain"/>
    <property type="match status" value="1"/>
</dbReference>
<dbReference type="PROSITE" id="PS00938">
    <property type="entry name" value="IF3"/>
    <property type="match status" value="1"/>
</dbReference>
<keyword id="KW-0963">Cytoplasm</keyword>
<keyword id="KW-0396">Initiation factor</keyword>
<keyword id="KW-0648">Protein biosynthesis</keyword>
<keyword id="KW-1185">Reference proteome</keyword>
<comment type="function">
    <text evidence="1">IF-3 binds to the 30S ribosomal subunit and shifts the equilibrium between 70S ribosomes and their 50S and 30S subunits in favor of the free subunits, thus enhancing the availability of 30S subunits on which protein synthesis initiation begins.</text>
</comment>
<comment type="subunit">
    <text evidence="1">Monomer.</text>
</comment>
<comment type="subcellular location">
    <subcellularLocation>
        <location evidence="1">Cytoplasm</location>
    </subcellularLocation>
</comment>
<comment type="similarity">
    <text evidence="1">Belongs to the IF-3 family.</text>
</comment>
<comment type="sequence caution" evidence="2">
    <conflict type="erroneous initiation">
        <sequence resource="EMBL-CDS" id="BAB81600"/>
    </conflict>
</comment>
<protein>
    <recommendedName>
        <fullName evidence="1">Translation initiation factor IF-3</fullName>
    </recommendedName>
</protein>
<accession>Q8XJ67</accession>
<evidence type="ECO:0000255" key="1">
    <source>
        <dbReference type="HAMAP-Rule" id="MF_00080"/>
    </source>
</evidence>
<evidence type="ECO:0000305" key="2"/>